<name>I23O2_MOUSE</name>
<feature type="chain" id="PRO_0000285263" description="Indoleamine 2,3-dioxygenase 2">
    <location>
        <begin position="1"/>
        <end position="405"/>
    </location>
</feature>
<feature type="binding site" description="proximal binding residue" evidence="1">
    <location>
        <position position="347"/>
    </location>
    <ligand>
        <name>heme</name>
        <dbReference type="ChEBI" id="CHEBI:30413"/>
    </ligand>
    <ligandPart>
        <name>Fe</name>
        <dbReference type="ChEBI" id="CHEBI:18248"/>
    </ligandPart>
</feature>
<feature type="sequence conflict" description="In Ref. 4; AAH26393." evidence="10" ref="4">
    <original>V</original>
    <variation>A</variation>
    <location>
        <position position="256"/>
    </location>
</feature>
<organism>
    <name type="scientific">Mus musculus</name>
    <name type="common">Mouse</name>
    <dbReference type="NCBI Taxonomy" id="10090"/>
    <lineage>
        <taxon>Eukaryota</taxon>
        <taxon>Metazoa</taxon>
        <taxon>Chordata</taxon>
        <taxon>Craniata</taxon>
        <taxon>Vertebrata</taxon>
        <taxon>Euteleostomi</taxon>
        <taxon>Mammalia</taxon>
        <taxon>Eutheria</taxon>
        <taxon>Euarchontoglires</taxon>
        <taxon>Glires</taxon>
        <taxon>Rodentia</taxon>
        <taxon>Myomorpha</taxon>
        <taxon>Muroidea</taxon>
        <taxon>Muridae</taxon>
        <taxon>Murinae</taxon>
        <taxon>Mus</taxon>
        <taxon>Mus</taxon>
    </lineage>
</organism>
<comment type="function">
    <text evidence="2 8">Catalyzes the first and rate-limiting step in the kynurenine pathway of tryptophan catabolism (PubMed:17499941). Involved in immune regulation (PubMed:25477879).</text>
</comment>
<comment type="catalytic activity">
    <reaction evidence="2">
        <text>L-tryptophan + O2 = N-formyl-L-kynurenine</text>
        <dbReference type="Rhea" id="RHEA:24536"/>
        <dbReference type="ChEBI" id="CHEBI:15379"/>
        <dbReference type="ChEBI" id="CHEBI:57912"/>
        <dbReference type="ChEBI" id="CHEBI:58629"/>
    </reaction>
</comment>
<comment type="cofactor">
    <cofactor evidence="1">
        <name>heme</name>
        <dbReference type="ChEBI" id="CHEBI:30413"/>
    </cofactor>
    <text evidence="1">Binds 1 heme group per subunit.</text>
</comment>
<comment type="activity regulation">
    <text evidence="2">Activity is inhibited by D-1MT (1-methyl-D-tryptophan) and MTH-trp (methylthiohydantoin-DL-tryptophan) but not L-1MT (1-methyl-L-tryptophan).</text>
</comment>
<comment type="biophysicochemical properties">
    <kinetics>
        <KM evidence="4">38.85 mM for L-tryptophan</KM>
        <text>Do not accept D-tryptophan as substrate.</text>
    </kinetics>
</comment>
<comment type="pathway">
    <text>Amino-acid degradation; L-tryptophan degradation via kynurenine pathway; L-kynurenine from L-tryptophan: step 1/2.</text>
</comment>
<comment type="tissue specificity">
    <text evidence="2 3 9">Expressed mainly in antigen-presenting immune cells, liver, kidney, brain, and placenta (PubMed:17671174, PubMed:25691885). Highly expressed in kidney, followed by epididymis and liver (at protein level) (PubMed:17499941). Detected in the tails of the spermatozoa in the testis and in the kidney tubules (at protein level) (PubMed:17499941). Constitutively expressed in brain.</text>
</comment>
<comment type="disruption phenotype">
    <text evidence="5 9">Knockout mice have no apparent defects in embryonic development or hematopoietic differentiation and have wild-type profiles for kynurenine in blood serum and for immune cells in spleen, lymph nodes, peritoneum, thymus and bone marrow. Knockout mice exhibit defects in IDO-mediated T-cell regulation and inflammatory responses (PubMed:25691885). They exhibit defects in allergic or autoimmune responses (PubMed:24402311).</text>
</comment>
<comment type="miscellaneous">
    <text evidence="1">Ido1 and Ido2 are 2 distinct enzymes which catalyze the same reaction. Ido2 Km for tryptophan is much higher than that of Ido1. Ido2 may play a role as a negative regulator of Ido1 by competing for heme-binding with Ido1. Low efficiency Ido2 enzymes have been conserved throughout vertebrate evolution, whereas higher efficiency Ido1 enzymes are dispensable in many lower vertebrate lineages. Ido1 may have arisen by gene duplication of a more ancient proto-IDO gene before the divergence of marsupial and eutherian (placental) mammals.</text>
</comment>
<comment type="similarity">
    <text evidence="10">Belongs to the indoleamine 2,3-dioxygenase family.</text>
</comment>
<comment type="sequence caution" evidence="10">
    <conflict type="erroneous initiation">
        <sequence resource="EMBL-CDS" id="AAH26393"/>
    </conflict>
    <text>Truncated N-terminus.</text>
</comment>
<dbReference type="EC" id="1.13.11.-" evidence="2 3"/>
<dbReference type="EMBL" id="EF137182">
    <property type="protein sequence ID" value="ABO33433.1"/>
    <property type="molecule type" value="mRNA"/>
</dbReference>
<dbReference type="EMBL" id="AC114602">
    <property type="status" value="NOT_ANNOTATED_CDS"/>
    <property type="molecule type" value="Genomic_DNA"/>
</dbReference>
<dbReference type="EMBL" id="CH466580">
    <property type="protein sequence ID" value="EDL32857.1"/>
    <property type="molecule type" value="Genomic_DNA"/>
</dbReference>
<dbReference type="EMBL" id="BC026393">
    <property type="protein sequence ID" value="AAH26393.1"/>
    <property type="status" value="ALT_INIT"/>
    <property type="molecule type" value="mRNA"/>
</dbReference>
<dbReference type="CCDS" id="CCDS40298.2"/>
<dbReference type="RefSeq" id="NP_666061.3">
    <property type="nucleotide sequence ID" value="NM_145949.2"/>
</dbReference>
<dbReference type="SMR" id="Q8R0V5"/>
<dbReference type="FunCoup" id="Q8R0V5">
    <property type="interactions" value="541"/>
</dbReference>
<dbReference type="STRING" id="10090.ENSMUSP00000113979"/>
<dbReference type="BindingDB" id="Q8R0V5"/>
<dbReference type="ChEMBL" id="CHEMBL2189159"/>
<dbReference type="DrugCentral" id="Q8R0V5"/>
<dbReference type="iPTMnet" id="Q8R0V5"/>
<dbReference type="PhosphoSitePlus" id="Q8R0V5"/>
<dbReference type="jPOST" id="Q8R0V5"/>
<dbReference type="PaxDb" id="10090-ENSMUSP00000113979"/>
<dbReference type="ProteomicsDB" id="269518"/>
<dbReference type="Antibodypedia" id="42276">
    <property type="antibodies" value="497 antibodies from 34 providers"/>
</dbReference>
<dbReference type="Ensembl" id="ENSMUST00000121992.2">
    <property type="protein sequence ID" value="ENSMUSP00000113979.2"/>
    <property type="gene ID" value="ENSMUSG00000031549.17"/>
</dbReference>
<dbReference type="GeneID" id="209176"/>
<dbReference type="KEGG" id="mmu:209176"/>
<dbReference type="UCSC" id="uc009ley.2">
    <property type="organism name" value="mouse"/>
</dbReference>
<dbReference type="UCSC" id="uc009lez.2">
    <property type="organism name" value="mouse"/>
</dbReference>
<dbReference type="AGR" id="MGI:2142489"/>
<dbReference type="CTD" id="169355"/>
<dbReference type="MGI" id="MGI:2142489">
    <property type="gene designation" value="Ido2"/>
</dbReference>
<dbReference type="VEuPathDB" id="HostDB:ENSMUSG00000031549"/>
<dbReference type="eggNOG" id="ENOG502QT99">
    <property type="taxonomic scope" value="Eukaryota"/>
</dbReference>
<dbReference type="GeneTree" id="ENSGT00940000161813"/>
<dbReference type="InParanoid" id="Q8R0V5"/>
<dbReference type="OMA" id="SNKIMEP"/>
<dbReference type="OrthoDB" id="25747at9989"/>
<dbReference type="PhylomeDB" id="Q8R0V5"/>
<dbReference type="TreeFam" id="TF330978"/>
<dbReference type="BRENDA" id="1.13.11.52">
    <property type="organism ID" value="3474"/>
</dbReference>
<dbReference type="Reactome" id="R-MMU-71240">
    <property type="pathway name" value="Tryptophan catabolism"/>
</dbReference>
<dbReference type="SABIO-RK" id="Q8R0V5"/>
<dbReference type="UniPathway" id="UPA00333">
    <property type="reaction ID" value="UER00453"/>
</dbReference>
<dbReference type="BioGRID-ORCS" id="209176">
    <property type="hits" value="1 hit in 78 CRISPR screens"/>
</dbReference>
<dbReference type="ChiTaRS" id="Ido2">
    <property type="organism name" value="mouse"/>
</dbReference>
<dbReference type="PRO" id="PR:Q8R0V5"/>
<dbReference type="Proteomes" id="UP000000589">
    <property type="component" value="Chromosome 8"/>
</dbReference>
<dbReference type="RNAct" id="Q8R0V5">
    <property type="molecule type" value="protein"/>
</dbReference>
<dbReference type="Bgee" id="ENSMUSG00000031549">
    <property type="expression patterns" value="Expressed in right kidney and 33 other cell types or tissues"/>
</dbReference>
<dbReference type="GO" id="GO:0005737">
    <property type="term" value="C:cytoplasm"/>
    <property type="evidence" value="ECO:0000314"/>
    <property type="project" value="MGI"/>
</dbReference>
<dbReference type="GO" id="GO:0020037">
    <property type="term" value="F:heme binding"/>
    <property type="evidence" value="ECO:0007669"/>
    <property type="project" value="InterPro"/>
</dbReference>
<dbReference type="GO" id="GO:0033754">
    <property type="term" value="F:indoleamine 2,3-dioxygenase activity"/>
    <property type="evidence" value="ECO:0000314"/>
    <property type="project" value="MGI"/>
</dbReference>
<dbReference type="GO" id="GO:0046872">
    <property type="term" value="F:metal ion binding"/>
    <property type="evidence" value="ECO:0007669"/>
    <property type="project" value="UniProtKB-KW"/>
</dbReference>
<dbReference type="GO" id="GO:0004833">
    <property type="term" value="F:tryptophan 2,3-dioxygenase activity"/>
    <property type="evidence" value="ECO:0007669"/>
    <property type="project" value="RHEA"/>
</dbReference>
<dbReference type="GO" id="GO:0002376">
    <property type="term" value="P:immune system process"/>
    <property type="evidence" value="ECO:0007669"/>
    <property type="project" value="UniProtKB-KW"/>
</dbReference>
<dbReference type="GO" id="GO:0019441">
    <property type="term" value="P:L-tryptophan catabolic process to kynurenine"/>
    <property type="evidence" value="ECO:0000314"/>
    <property type="project" value="MGI"/>
</dbReference>
<dbReference type="FunFam" id="1.20.58.480:FF:000003">
    <property type="entry name" value="Indoleamine 2,3-dioxygenase 1"/>
    <property type="match status" value="1"/>
</dbReference>
<dbReference type="Gene3D" id="1.20.58.480">
    <property type="match status" value="1"/>
</dbReference>
<dbReference type="InterPro" id="IPR000898">
    <property type="entry name" value="Indolamine_dOase"/>
</dbReference>
<dbReference type="InterPro" id="IPR037217">
    <property type="entry name" value="Trp/Indoleamine_2_3_dOase-like"/>
</dbReference>
<dbReference type="PANTHER" id="PTHR28657">
    <property type="entry name" value="INDOLEAMINE 2,3-DIOXYGENASE"/>
    <property type="match status" value="1"/>
</dbReference>
<dbReference type="PANTHER" id="PTHR28657:SF4">
    <property type="entry name" value="INDOLEAMINE 2,3-DIOXYGENASE 2"/>
    <property type="match status" value="1"/>
</dbReference>
<dbReference type="Pfam" id="PF01231">
    <property type="entry name" value="IDO"/>
    <property type="match status" value="1"/>
</dbReference>
<dbReference type="SUPFAM" id="SSF140959">
    <property type="entry name" value="Indolic compounds 2,3-dioxygenase-like"/>
    <property type="match status" value="1"/>
</dbReference>
<accession>Q8R0V5</accession>
<accession>A4UHF3</accession>
<accession>E9QKA9</accession>
<gene>
    <name evidence="12" type="primary">Ido2</name>
    <name evidence="6" type="synonym">Indol1</name>
</gene>
<evidence type="ECO:0000250" key="1">
    <source>
        <dbReference type="UniProtKB" id="P14902"/>
    </source>
</evidence>
<evidence type="ECO:0000269" key="2">
    <source>
    </source>
</evidence>
<evidence type="ECO:0000269" key="3">
    <source>
    </source>
</evidence>
<evidence type="ECO:0000269" key="4">
    <source>
    </source>
</evidence>
<evidence type="ECO:0000269" key="5">
    <source>
    </source>
</evidence>
<evidence type="ECO:0000303" key="6">
    <source>
    </source>
</evidence>
<evidence type="ECO:0000303" key="7">
    <source>
    </source>
</evidence>
<evidence type="ECO:0000303" key="8">
    <source>
    </source>
</evidence>
<evidence type="ECO:0000303" key="9">
    <source>
    </source>
</evidence>
<evidence type="ECO:0000305" key="10"/>
<evidence type="ECO:0000305" key="11">
    <source>
    </source>
</evidence>
<evidence type="ECO:0000312" key="12">
    <source>
        <dbReference type="MGI" id="MGI:2142489"/>
    </source>
</evidence>
<protein>
    <recommendedName>
        <fullName evidence="11">Indoleamine 2,3-dioxygenase 2</fullName>
        <shortName evidence="7">IDO-2</shortName>
        <ecNumber evidence="2 3">1.13.11.-</ecNumber>
    </recommendedName>
    <alternativeName>
        <fullName evidence="6">Indoleamine 2,3-dioxygenase-like protein 1</fullName>
    </alternativeName>
    <alternativeName>
        <fullName>Indoleamine-pyrrole 2,3-dioxygenase-like protein 1</fullName>
    </alternativeName>
</protein>
<sequence>MEPQSQSMTLEVPLSLGRYHISEEYGFLLPNPLEALPDHYKPWMEIALRLPHLIENRQLRAHVYRMPLLDCRFLKSYREQRLAHMALAAITMGFVWQEGEGQPQKVLPRSLAIPFVEVSRNLGLPPILVHSDLVLTNWTKRNPEGPLEISNLETIISFPGGESLRGFILVTVLVEKAAVPGLKALVQGMEAIRQHSQDTLLEALQQLRLSIQDITRALAQMHDYVDPDIFYSVIRIFLSGWKDNPAMPVGLVYEGVATEPLKYSGGSAAQSSVLHAFDEFLGIEHCKESVGFLHRMRDYMPPSHKAFLEDLHVAPSLRDYILASGPGDCLMAYNQCVEALGELRSYHINVVARYIISAATRARSRGLTNPSPHALEDRGTGGTAMLSFLKSVREKTMEALLCPGA</sequence>
<proteinExistence type="evidence at protein level"/>
<keyword id="KW-0223">Dioxygenase</keyword>
<keyword id="KW-0349">Heme</keyword>
<keyword id="KW-0391">Immunity</keyword>
<keyword id="KW-0408">Iron</keyword>
<keyword id="KW-0479">Metal-binding</keyword>
<keyword id="KW-0560">Oxidoreductase</keyword>
<keyword id="KW-1185">Reference proteome</keyword>
<keyword id="KW-0823">Tryptophan catabolism</keyword>
<reference key="1">
    <citation type="journal article" date="2007" name="Gene">
        <title>Characterization of an indoleamine 2,3-dioxygenase-like protein found in humans and mice.</title>
        <authorList>
            <person name="Ball H.J."/>
            <person name="Sanchez-Perez A."/>
            <person name="Weiser S."/>
            <person name="Austin C.J.D."/>
            <person name="Astelbauer F."/>
            <person name="Miu J."/>
            <person name="McQuillan J.A."/>
            <person name="Stocker R."/>
            <person name="Jermiin L.S."/>
            <person name="Hunt N.H."/>
        </authorList>
    </citation>
    <scope>NUCLEOTIDE SEQUENCE [MRNA]</scope>
    <scope>FUNCTION</scope>
    <scope>CATALYTIC ACTIVITY</scope>
    <scope>TISSUE SPECIFICITY</scope>
    <scope>ACTIVITY REGULATION</scope>
</reference>
<reference key="2">
    <citation type="journal article" date="2009" name="PLoS Biol.">
        <title>Lineage-specific biology revealed by a finished genome assembly of the mouse.</title>
        <authorList>
            <person name="Church D.M."/>
            <person name="Goodstadt L."/>
            <person name="Hillier L.W."/>
            <person name="Zody M.C."/>
            <person name="Goldstein S."/>
            <person name="She X."/>
            <person name="Bult C.J."/>
            <person name="Agarwala R."/>
            <person name="Cherry J.L."/>
            <person name="DiCuccio M."/>
            <person name="Hlavina W."/>
            <person name="Kapustin Y."/>
            <person name="Meric P."/>
            <person name="Maglott D."/>
            <person name="Birtle Z."/>
            <person name="Marques A.C."/>
            <person name="Graves T."/>
            <person name="Zhou S."/>
            <person name="Teague B."/>
            <person name="Potamousis K."/>
            <person name="Churas C."/>
            <person name="Place M."/>
            <person name="Herschleb J."/>
            <person name="Runnheim R."/>
            <person name="Forrest D."/>
            <person name="Amos-Landgraf J."/>
            <person name="Schwartz D.C."/>
            <person name="Cheng Z."/>
            <person name="Lindblad-Toh K."/>
            <person name="Eichler E.E."/>
            <person name="Ponting C.P."/>
        </authorList>
    </citation>
    <scope>NUCLEOTIDE SEQUENCE [LARGE SCALE GENOMIC DNA]</scope>
    <source>
        <strain>C57BL/6J</strain>
    </source>
</reference>
<reference key="3">
    <citation type="submission" date="2005-07" db="EMBL/GenBank/DDBJ databases">
        <authorList>
            <person name="Mural R.J."/>
            <person name="Adams M.D."/>
            <person name="Myers E.W."/>
            <person name="Smith H.O."/>
            <person name="Venter J.C."/>
        </authorList>
    </citation>
    <scope>NUCLEOTIDE SEQUENCE [LARGE SCALE GENOMIC DNA]</scope>
</reference>
<reference key="4">
    <citation type="journal article" date="2004" name="Genome Res.">
        <title>The status, quality, and expansion of the NIH full-length cDNA project: the Mammalian Gene Collection (MGC).</title>
        <authorList>
            <consortium name="The MGC Project Team"/>
        </authorList>
    </citation>
    <scope>NUCLEOTIDE SEQUENCE [LARGE SCALE MRNA]</scope>
    <source>
        <strain>FVB/N</strain>
        <tissue>Liver</tissue>
    </source>
</reference>
<reference key="5">
    <citation type="journal article" date="2007" name="J. Mol. Evol.">
        <title>Evolution of vertebrate indoleamine 2,3-dioxygenases.</title>
        <authorList>
            <person name="Yuasa H.J."/>
            <person name="Takubo M."/>
            <person name="Takahashi A."/>
            <person name="Hasegawa T."/>
            <person name="Noma H."/>
            <person name="Suzuki T."/>
        </authorList>
    </citation>
    <scope>BIOPHYSICOCHEMICAL PROPERTIES</scope>
</reference>
<reference key="6">
    <citation type="journal article" date="2007" name="Cancer Res.">
        <title>Novel tryptophan catabolic enzyme IDO2 is the preferred biochemical target of the antitumor indoleamine 2,3-dioxygenase inhibitory compound D-1-methyl-tryptophan.</title>
        <authorList>
            <person name="Metz R."/>
            <person name="Duhadaway J.B."/>
            <person name="Kamasani U."/>
            <person name="Laury-Kleintop L."/>
            <person name="Muller A.J."/>
            <person name="Prendergast G.C."/>
        </authorList>
    </citation>
    <scope>FUNCTION</scope>
    <scope>CATALYTIC ACTIVITY</scope>
    <scope>ACTIVITY REGULATION</scope>
    <scope>TISSUE SPECIFICITY</scope>
</reference>
<reference key="7">
    <citation type="journal article" date="2010" name="Cell">
        <title>A tissue-specific atlas of mouse protein phosphorylation and expression.</title>
        <authorList>
            <person name="Huttlin E.L."/>
            <person name="Jedrychowski M.P."/>
            <person name="Elias J.E."/>
            <person name="Goswami T."/>
            <person name="Rad R."/>
            <person name="Beausoleil S.A."/>
            <person name="Villen J."/>
            <person name="Haas W."/>
            <person name="Sowa M.E."/>
            <person name="Gygi S.P."/>
        </authorList>
    </citation>
    <scope>IDENTIFICATION BY MASS SPECTROMETRY [LARGE SCALE ANALYSIS]</scope>
    <source>
        <tissue>Liver</tissue>
    </source>
</reference>
<reference key="8">
    <citation type="journal article" date="2014" name="Int. Immunol.">
        <title>IDO2 is critical for IDO1-mediated T-cell regulation and exerts a non-redundant function in inflammation.</title>
        <authorList>
            <person name="Metz R."/>
            <person name="Smith C."/>
            <person name="DuHadaway J.B."/>
            <person name="Chandler P."/>
            <person name="Baban B."/>
            <person name="Merlo L.M."/>
            <person name="Pigott E."/>
            <person name="Keough M.P."/>
            <person name="Rust S."/>
            <person name="Mellor A.L."/>
            <person name="Mandik-Nayak L."/>
            <person name="Muller A.J."/>
            <person name="Prendergast G.C."/>
        </authorList>
    </citation>
    <scope>DISRUPTION PHENOTYPE</scope>
</reference>
<reference key="9">
    <citation type="journal article" date="2014" name="Front. Immunol.">
        <title>IDO2 in immunomodulation and autoimmune disease.</title>
        <authorList>
            <person name="Prendergast G.C."/>
            <person name="Metz R."/>
            <person name="Muller A.J."/>
            <person name="Merlo L.M."/>
            <person name="Mandik-Nayak L."/>
        </authorList>
    </citation>
    <scope>REVIEW</scope>
    <scope>DISRUPTION PHENOTYPE</scope>
</reference>
<reference key="10">
    <citation type="journal article" date="2015" name="Front. Immunol.">
        <title>Tryptophan-degrading enzymes in tumoral immune resistance.</title>
        <authorList>
            <person name="van Baren N."/>
            <person name="Van den Eynde B.J."/>
        </authorList>
    </citation>
    <scope>REVIEW</scope>
    <scope>TISSUE SPECIFICITY</scope>
</reference>